<keyword id="KW-0002">3D-structure</keyword>
<keyword id="KW-1003">Cell membrane</keyword>
<keyword id="KW-0326">Glycosidase</keyword>
<keyword id="KW-0378">Hydrolase</keyword>
<keyword id="KW-0449">Lipoprotein</keyword>
<keyword id="KW-0472">Membrane</keyword>
<keyword id="KW-0564">Palmitate</keyword>
<keyword id="KW-0732">Signal</keyword>
<organism>
    <name type="scientific">Klebsiella aerogenes</name>
    <name type="common">Enterobacter aerogenes</name>
    <dbReference type="NCBI Taxonomy" id="548"/>
    <lineage>
        <taxon>Bacteria</taxon>
        <taxon>Pseudomonadati</taxon>
        <taxon>Pseudomonadota</taxon>
        <taxon>Gammaproteobacteria</taxon>
        <taxon>Enterobacterales</taxon>
        <taxon>Enterobacteriaceae</taxon>
        <taxon>Klebsiella/Raoultella group</taxon>
        <taxon>Klebsiella</taxon>
    </lineage>
</organism>
<dbReference type="EC" id="3.2.1.41"/>
<dbReference type="EMBL" id="M16187">
    <property type="protein sequence ID" value="AAA25124.1"/>
    <property type="status" value="ALT_SEQ"/>
    <property type="molecule type" value="Genomic_DNA"/>
</dbReference>
<dbReference type="PIR" id="A26879">
    <property type="entry name" value="A26879"/>
</dbReference>
<dbReference type="PDB" id="2FGZ">
    <property type="method" value="X-ray"/>
    <property type="resolution" value="1.75 A"/>
    <property type="chains" value="A=20-1090"/>
</dbReference>
<dbReference type="PDB" id="2FH6">
    <property type="method" value="X-ray"/>
    <property type="resolution" value="1.80 A"/>
    <property type="chains" value="A=20-1090"/>
</dbReference>
<dbReference type="PDB" id="2FH8">
    <property type="method" value="X-ray"/>
    <property type="resolution" value="1.90 A"/>
    <property type="chains" value="A=20-1087"/>
</dbReference>
<dbReference type="PDB" id="2FHB">
    <property type="method" value="X-ray"/>
    <property type="resolution" value="1.80 A"/>
    <property type="chains" value="A=20-1090"/>
</dbReference>
<dbReference type="PDB" id="2FHC">
    <property type="method" value="X-ray"/>
    <property type="resolution" value="1.85 A"/>
    <property type="chains" value="A=20-1090"/>
</dbReference>
<dbReference type="PDB" id="2FHF">
    <property type="method" value="X-ray"/>
    <property type="resolution" value="1.65 A"/>
    <property type="chains" value="A=20-1090"/>
</dbReference>
<dbReference type="PDBsum" id="2FGZ"/>
<dbReference type="PDBsum" id="2FH6"/>
<dbReference type="PDBsum" id="2FH8"/>
<dbReference type="PDBsum" id="2FHB"/>
<dbReference type="PDBsum" id="2FHC"/>
<dbReference type="PDBsum" id="2FHF"/>
<dbReference type="SMR" id="P07811"/>
<dbReference type="CAZy" id="CBM41">
    <property type="family name" value="Carbohydrate-Binding Module Family 41"/>
</dbReference>
<dbReference type="CAZy" id="CBM48">
    <property type="family name" value="Carbohydrate-Binding Module Family 48"/>
</dbReference>
<dbReference type="CAZy" id="GH13">
    <property type="family name" value="Glycoside Hydrolase Family 13"/>
</dbReference>
<dbReference type="KEGG" id="ag:AAA25124"/>
<dbReference type="SABIO-RK" id="P07811"/>
<dbReference type="EvolutionaryTrace" id="P07811"/>
<dbReference type="GO" id="GO:0005886">
    <property type="term" value="C:plasma membrane"/>
    <property type="evidence" value="ECO:0007669"/>
    <property type="project" value="UniProtKB-SubCell"/>
</dbReference>
<dbReference type="GO" id="GO:0030246">
    <property type="term" value="F:carbohydrate binding"/>
    <property type="evidence" value="ECO:0007669"/>
    <property type="project" value="InterPro"/>
</dbReference>
<dbReference type="GO" id="GO:0051060">
    <property type="term" value="F:pullulanase activity"/>
    <property type="evidence" value="ECO:0007669"/>
    <property type="project" value="UniProtKB-EC"/>
</dbReference>
<dbReference type="GO" id="GO:0005975">
    <property type="term" value="P:carbohydrate metabolic process"/>
    <property type="evidence" value="ECO:0007669"/>
    <property type="project" value="InterPro"/>
</dbReference>
<dbReference type="CDD" id="cd11341">
    <property type="entry name" value="AmyAc_Pullulanase_LD-like"/>
    <property type="match status" value="1"/>
</dbReference>
<dbReference type="CDD" id="cd10315">
    <property type="entry name" value="CBM41_pullulanase"/>
    <property type="match status" value="1"/>
</dbReference>
<dbReference type="CDD" id="cd02860">
    <property type="entry name" value="E_set_Pullulanase"/>
    <property type="match status" value="1"/>
</dbReference>
<dbReference type="Gene3D" id="2.60.40.1110">
    <property type="match status" value="1"/>
</dbReference>
<dbReference type="Gene3D" id="3.20.20.80">
    <property type="entry name" value="Glycosidases"/>
    <property type="match status" value="1"/>
</dbReference>
<dbReference type="Gene3D" id="2.60.40.1180">
    <property type="entry name" value="Golgi alpha-mannosidase II"/>
    <property type="match status" value="1"/>
</dbReference>
<dbReference type="Gene3D" id="2.60.40.10">
    <property type="entry name" value="Immunoglobulins"/>
    <property type="match status" value="1"/>
</dbReference>
<dbReference type="Gene3D" id="2.60.40.1130">
    <property type="entry name" value="Rab geranylgeranyltransferase alpha-subunit, insert domain"/>
    <property type="match status" value="1"/>
</dbReference>
<dbReference type="InterPro" id="IPR013784">
    <property type="entry name" value="Carb-bd-like_fold"/>
</dbReference>
<dbReference type="InterPro" id="IPR005323">
    <property type="entry name" value="CBM41_pullulanase"/>
</dbReference>
<dbReference type="InterPro" id="IPR006047">
    <property type="entry name" value="Glyco_hydro_13_cat_dom"/>
</dbReference>
<dbReference type="InterPro" id="IPR004193">
    <property type="entry name" value="Glyco_hydro_13_N"/>
</dbReference>
<dbReference type="InterPro" id="IPR013780">
    <property type="entry name" value="Glyco_hydro_b"/>
</dbReference>
<dbReference type="InterPro" id="IPR017853">
    <property type="entry name" value="Glycoside_hydrolase_SF"/>
</dbReference>
<dbReference type="InterPro" id="IPR013783">
    <property type="entry name" value="Ig-like_fold"/>
</dbReference>
<dbReference type="InterPro" id="IPR014756">
    <property type="entry name" value="Ig_E-set"/>
</dbReference>
<dbReference type="InterPro" id="IPR011839">
    <property type="entry name" value="Pullul_strch"/>
</dbReference>
<dbReference type="InterPro" id="IPR024561">
    <property type="entry name" value="Pullul_strch_C"/>
</dbReference>
<dbReference type="InterPro" id="IPR041111">
    <property type="entry name" value="Pullulanase_Ins"/>
</dbReference>
<dbReference type="InterPro" id="IPR040671">
    <property type="entry name" value="Pullulanase_N2"/>
</dbReference>
<dbReference type="NCBIfam" id="TIGR02103">
    <property type="entry name" value="pullul_strch"/>
    <property type="match status" value="1"/>
</dbReference>
<dbReference type="PANTHER" id="PTHR43002">
    <property type="entry name" value="GLYCOGEN DEBRANCHING ENZYME"/>
    <property type="match status" value="1"/>
</dbReference>
<dbReference type="Pfam" id="PF02922">
    <property type="entry name" value="CBM_48"/>
    <property type="match status" value="1"/>
</dbReference>
<dbReference type="Pfam" id="PF03714">
    <property type="entry name" value="PUD"/>
    <property type="match status" value="1"/>
</dbReference>
<dbReference type="Pfam" id="PF11852">
    <property type="entry name" value="Pullul_strch_C"/>
    <property type="match status" value="1"/>
</dbReference>
<dbReference type="Pfam" id="PF18494">
    <property type="entry name" value="Pullulanase_Ins"/>
    <property type="match status" value="1"/>
</dbReference>
<dbReference type="Pfam" id="PF17967">
    <property type="entry name" value="Pullulanase_N2"/>
    <property type="match status" value="1"/>
</dbReference>
<dbReference type="SMART" id="SM00642">
    <property type="entry name" value="Aamy"/>
    <property type="match status" value="1"/>
</dbReference>
<dbReference type="SUPFAM" id="SSF51445">
    <property type="entry name" value="(Trans)glycosidases"/>
    <property type="match status" value="1"/>
</dbReference>
<dbReference type="SUPFAM" id="SSF81296">
    <property type="entry name" value="E set domains"/>
    <property type="match status" value="2"/>
</dbReference>
<dbReference type="SUPFAM" id="SSF51011">
    <property type="entry name" value="Glycosyl hydrolase domain"/>
    <property type="match status" value="1"/>
</dbReference>
<dbReference type="SUPFAM" id="SSF49452">
    <property type="entry name" value="Starch-binding domain-like"/>
    <property type="match status" value="1"/>
</dbReference>
<dbReference type="PROSITE" id="PS51257">
    <property type="entry name" value="PROKAR_LIPOPROTEIN"/>
    <property type="match status" value="1"/>
</dbReference>
<evidence type="ECO:0000250" key="1"/>
<evidence type="ECO:0000256" key="2">
    <source>
        <dbReference type="SAM" id="MobiDB-lite"/>
    </source>
</evidence>
<evidence type="ECO:0000269" key="3">
    <source>
    </source>
</evidence>
<evidence type="ECO:0000305" key="4"/>
<evidence type="ECO:0000305" key="5">
    <source>
    </source>
</evidence>
<evidence type="ECO:0000305" key="6">
    <source>
    </source>
</evidence>
<evidence type="ECO:0007829" key="7">
    <source>
        <dbReference type="PDB" id="2FH8"/>
    </source>
</evidence>
<sequence>MLRYTCHALFLGSLVLLSGCDNSSSSSTSGSPGSPGNPGNPGTPGTPDPQDVVVRLPDVAVPGEAVQASARQAVIHLVDIAGITSSTPADYATKNLYLWNNETCDALSAPVADWNDVSTTPTGSDKYGPYWVIPLTKESGSINVIVRDGTNKLIDSGRVSFSDFTDRTVSVIAGNSAVYDSRADAFRAAFGVALADAHWVDKTTLLWPGGENKPIVRLYYSHSSKVAADSNGEFSDKYVKLTPTTVNQQVSMRFPHLASYPAFKLPDDVNVDELLQGDDGGIAESDGILSLSHPGADRRRAGRYLCRRAEALSYGAQLTDSGVTFRVWAPTAQQVELVIYSADKKVIASHPMTRDSASGAWSWQGGSDLKGAFYRYAMTVYHPQSRKVEQYEVTDPYAHSLSTNSEYSQVVDLNDSALKPEGWDGLTMPHAQKTKADLAKMTIHESHIRDLSAWDQTVPAELRGKYLALTAQESNMVQHLKQLSASGVTHIELLPVFDLATVNEFSDKVADIQQPFSRLCEVNSAVKSSEFAGYCDSGSTVEEVLTQLKQNDSKDNPQVQALNTLVAQTDSYNWGYDPFHYTVPEGSYATDPEGTARIKEFRTMIQAIKQDLGMNVIMDVVYNHTNAAGPTDRTSVLDKIVPWYYQRLNETTGSVESATCCSDSAPEHRMFAKLIADSLAVWTTDYKIDGFRFDLMGYHPKAQILSAWERIKALNPDIYFFGEGWDSNQSDRFEIASQINLKGTGIGTFSDRLRDAVRGGGPFDSGDALRQNQGVGSGAGVLPNELTTLSDDQARHLADLTRLGMAGNLADFVLIDKDGAVKRGSEIDYNGAPGGYAADPTEVVNYVSKHDNQTLWDMISYKAAQEADLDTRVRMQAVSLATVMLGQGIAFDQQGSELLRSKSFTRDSYDSGDWFNRVDYSLQDNNYNVGMPRSSDDGSNYDIIARVKDAVATPGETELKQMTAFYQELTALRKSSPLFTLGDGATVMKRVDFRNTGADQQTGLLVMTIDDGMQAGRQSGQPCRRHRGGDQRRAGKPDAAGLRRHIAPAERYSAGGGRPVAGERVQVAADGSVTLPAWSVAVLELPQASRRALACR</sequence>
<feature type="signal peptide">
    <location>
        <begin position="1"/>
        <end position="19"/>
    </location>
</feature>
<feature type="chain" id="PRO_0000001426" description="Pullulanase">
    <location>
        <begin position="20"/>
        <end position="1096"/>
    </location>
</feature>
<feature type="region of interest" description="Disordered" evidence="2">
    <location>
        <begin position="24"/>
        <end position="50"/>
    </location>
</feature>
<feature type="region of interest" description="Disordered" evidence="2">
    <location>
        <begin position="1014"/>
        <end position="1044"/>
    </location>
</feature>
<feature type="compositionally biased region" description="Low complexity" evidence="2">
    <location>
        <begin position="24"/>
        <end position="34"/>
    </location>
</feature>
<feature type="active site" description="Nucleophile" evidence="1">
    <location>
        <position position="694"/>
    </location>
</feature>
<feature type="active site" description="Proton donor" evidence="1">
    <location>
        <position position="723"/>
    </location>
</feature>
<feature type="site" description="Transition state stabilizer" evidence="1">
    <location>
        <position position="851"/>
    </location>
</feature>
<feature type="lipid moiety-binding region" description="N-palmitoyl cysteine" evidence="5 6">
    <location>
        <position position="20"/>
    </location>
</feature>
<feature type="lipid moiety-binding region" description="S-diacylglycerol cysteine" evidence="5 6">
    <location>
        <position position="20"/>
    </location>
</feature>
<feature type="strand" evidence="7">
    <location>
        <begin position="197"/>
        <end position="201"/>
    </location>
</feature>
<feature type="strand" evidence="7">
    <location>
        <begin position="204"/>
        <end position="206"/>
    </location>
</feature>
<feature type="helix" evidence="7">
    <location>
        <begin position="208"/>
        <end position="210"/>
    </location>
</feature>
<feature type="strand" evidence="7">
    <location>
        <begin position="214"/>
        <end position="224"/>
    </location>
</feature>
<feature type="strand" evidence="7">
    <location>
        <begin position="236"/>
        <end position="240"/>
    </location>
</feature>
<feature type="strand" evidence="7">
    <location>
        <begin position="242"/>
        <end position="244"/>
    </location>
</feature>
<feature type="helix" evidence="7">
    <location>
        <begin position="248"/>
        <end position="253"/>
    </location>
</feature>
<feature type="helix" evidence="7">
    <location>
        <begin position="255"/>
        <end position="257"/>
    </location>
</feature>
<feature type="strand" evidence="7">
    <location>
        <begin position="262"/>
        <end position="264"/>
    </location>
</feature>
<feature type="helix" evidence="7">
    <location>
        <begin position="271"/>
        <end position="274"/>
    </location>
</feature>
<feature type="strand" evidence="7">
    <location>
        <begin position="277"/>
        <end position="283"/>
    </location>
</feature>
<feature type="strand" evidence="7">
    <location>
        <begin position="288"/>
        <end position="296"/>
    </location>
</feature>
<feature type="helix" evidence="7">
    <location>
        <begin position="298"/>
        <end position="310"/>
    </location>
</feature>
<feature type="strand" evidence="7">
    <location>
        <begin position="315"/>
        <end position="318"/>
    </location>
</feature>
<feature type="strand" evidence="7">
    <location>
        <begin position="323"/>
        <end position="328"/>
    </location>
</feature>
<feature type="strand" evidence="7">
    <location>
        <begin position="332"/>
        <end position="340"/>
    </location>
</feature>
<feature type="strand" evidence="7">
    <location>
        <begin position="346"/>
        <end position="351"/>
    </location>
</feature>
<feature type="turn" evidence="7">
    <location>
        <begin position="356"/>
        <end position="358"/>
    </location>
</feature>
<feature type="strand" evidence="7">
    <location>
        <begin position="360"/>
        <end position="365"/>
    </location>
</feature>
<feature type="helix" evidence="7">
    <location>
        <begin position="367"/>
        <end position="369"/>
    </location>
</feature>
<feature type="strand" evidence="7">
    <location>
        <begin position="373"/>
        <end position="382"/>
    </location>
</feature>
<feature type="turn" evidence="7">
    <location>
        <begin position="383"/>
        <end position="386"/>
    </location>
</feature>
<feature type="strand" evidence="7">
    <location>
        <begin position="387"/>
        <end position="393"/>
    </location>
</feature>
<feature type="helix" evidence="7">
    <location>
        <begin position="403"/>
        <end position="405"/>
    </location>
</feature>
<feature type="strand" evidence="7">
    <location>
        <begin position="406"/>
        <end position="409"/>
    </location>
</feature>
<feature type="helix" evidence="7">
    <location>
        <begin position="416"/>
        <end position="418"/>
    </location>
</feature>
<feature type="helix" evidence="7">
    <location>
        <begin position="423"/>
        <end position="425"/>
    </location>
</feature>
<feature type="helix" evidence="7">
    <location>
        <begin position="435"/>
        <end position="439"/>
    </location>
</feature>
<feature type="strand" evidence="7">
    <location>
        <begin position="442"/>
        <end position="446"/>
    </location>
</feature>
<feature type="helix" evidence="7">
    <location>
        <begin position="448"/>
        <end position="452"/>
    </location>
</feature>
<feature type="helix" evidence="7">
    <location>
        <begin position="460"/>
        <end position="462"/>
    </location>
</feature>
<feature type="helix" evidence="7">
    <location>
        <begin position="466"/>
        <end position="470"/>
    </location>
</feature>
<feature type="helix" evidence="7">
    <location>
        <begin position="475"/>
        <end position="485"/>
    </location>
</feature>
<feature type="strand" evidence="7">
    <location>
        <begin position="490"/>
        <end position="494"/>
    </location>
</feature>
<feature type="strand" evidence="7">
    <location>
        <begin position="497"/>
        <end position="502"/>
    </location>
</feature>
<feature type="helix" evidence="7">
    <location>
        <begin position="506"/>
        <end position="508"/>
    </location>
</feature>
<feature type="helix" evidence="7">
    <location>
        <begin position="516"/>
        <end position="522"/>
    </location>
</feature>
<feature type="helix" evidence="7">
    <location>
        <begin position="524"/>
        <end position="527"/>
    </location>
</feature>
<feature type="helix" evidence="7">
    <location>
        <begin position="532"/>
        <end position="534"/>
    </location>
</feature>
<feature type="helix" evidence="7">
    <location>
        <begin position="541"/>
        <end position="548"/>
    </location>
</feature>
<feature type="helix" evidence="7">
    <location>
        <begin position="558"/>
        <end position="569"/>
    </location>
</feature>
<feature type="strand" evidence="7">
    <location>
        <begin position="578"/>
        <end position="584"/>
    </location>
</feature>
<feature type="helix" evidence="7">
    <location>
        <begin position="596"/>
        <end position="610"/>
    </location>
</feature>
<feature type="strand" evidence="7">
    <location>
        <begin position="615"/>
        <end position="620"/>
    </location>
</feature>
<feature type="strand" evidence="7">
    <location>
        <begin position="624"/>
        <end position="626"/>
    </location>
</feature>
<feature type="turn" evidence="7">
    <location>
        <begin position="629"/>
        <end position="631"/>
    </location>
</feature>
<feature type="helix" evidence="7">
    <location>
        <begin position="637"/>
        <end position="640"/>
    </location>
</feature>
<feature type="turn" evidence="7">
    <location>
        <begin position="642"/>
        <end position="644"/>
    </location>
</feature>
<feature type="turn" evidence="7">
    <location>
        <begin position="650"/>
        <end position="652"/>
    </location>
</feature>
<feature type="strand" evidence="7">
    <location>
        <begin position="658"/>
        <end position="664"/>
    </location>
</feature>
<feature type="helix" evidence="7">
    <location>
        <begin position="669"/>
        <end position="684"/>
    </location>
</feature>
<feature type="strand" evidence="7">
    <location>
        <begin position="690"/>
        <end position="693"/>
    </location>
</feature>
<feature type="helix" evidence="7">
    <location>
        <begin position="696"/>
        <end position="698"/>
    </location>
</feature>
<feature type="helix" evidence="7">
    <location>
        <begin position="701"/>
        <end position="714"/>
    </location>
</feature>
<feature type="strand" evidence="7">
    <location>
        <begin position="719"/>
        <end position="722"/>
    </location>
</feature>
<feature type="turn" evidence="7">
    <location>
        <begin position="730"/>
        <end position="732"/>
    </location>
</feature>
<feature type="turn" evidence="7">
    <location>
        <begin position="738"/>
        <end position="743"/>
    </location>
</feature>
<feature type="strand" evidence="7">
    <location>
        <begin position="747"/>
        <end position="749"/>
    </location>
</feature>
<feature type="helix" evidence="7">
    <location>
        <begin position="752"/>
        <end position="758"/>
    </location>
</feature>
<feature type="helix" evidence="7">
    <location>
        <begin position="768"/>
        <end position="771"/>
    </location>
</feature>
<feature type="helix" evidence="7">
    <location>
        <begin position="775"/>
        <end position="777"/>
    </location>
</feature>
<feature type="turn" evidence="7">
    <location>
        <begin position="778"/>
        <end position="781"/>
    </location>
</feature>
<feature type="helix" evidence="7">
    <location>
        <begin position="791"/>
        <end position="805"/>
    </location>
</feature>
<feature type="strand" evidence="7">
    <location>
        <begin position="813"/>
        <end position="815"/>
    </location>
</feature>
<feature type="strand" evidence="7">
    <location>
        <begin position="821"/>
        <end position="823"/>
    </location>
</feature>
<feature type="helix" evidence="7">
    <location>
        <begin position="824"/>
        <end position="826"/>
    </location>
</feature>
<feature type="strand" evidence="7">
    <location>
        <begin position="827"/>
        <end position="829"/>
    </location>
</feature>
<feature type="strand" evidence="7">
    <location>
        <begin position="832"/>
        <end position="834"/>
    </location>
</feature>
<feature type="strand" evidence="7">
    <location>
        <begin position="837"/>
        <end position="839"/>
    </location>
</feature>
<feature type="helix" evidence="7">
    <location>
        <begin position="840"/>
        <end position="842"/>
    </location>
</feature>
<feature type="strand" evidence="7">
    <location>
        <begin position="843"/>
        <end position="845"/>
    </location>
</feature>
<feature type="strand" evidence="7">
    <location>
        <begin position="850"/>
        <end position="852"/>
    </location>
</feature>
<feature type="helix" evidence="7">
    <location>
        <begin position="855"/>
        <end position="862"/>
    </location>
</feature>
<feature type="helix" evidence="7">
    <location>
        <begin position="869"/>
        <end position="884"/>
    </location>
</feature>
<feature type="strand" evidence="7">
    <location>
        <begin position="886"/>
        <end position="893"/>
    </location>
</feature>
<feature type="helix" evidence="7">
    <location>
        <begin position="896"/>
        <end position="898"/>
    </location>
</feature>
<feature type="helix" evidence="7">
    <location>
        <begin position="912"/>
        <end position="916"/>
    </location>
</feature>
<feature type="strand" evidence="7">
    <location>
        <begin position="928"/>
        <end position="930"/>
    </location>
</feature>
<feature type="helix" evidence="7">
    <location>
        <begin position="934"/>
        <end position="937"/>
    </location>
</feature>
<feature type="helix" evidence="7">
    <location>
        <begin position="938"/>
        <end position="940"/>
    </location>
</feature>
<feature type="helix" evidence="7">
    <location>
        <begin position="941"/>
        <end position="947"/>
    </location>
</feature>
<feature type="helix" evidence="7">
    <location>
        <begin position="956"/>
        <end position="973"/>
    </location>
</feature>
<feature type="helix" evidence="7">
    <location>
        <begin position="977"/>
        <end position="980"/>
    </location>
</feature>
<feature type="helix" evidence="7">
    <location>
        <begin position="984"/>
        <end position="990"/>
    </location>
</feature>
<feature type="strand" evidence="7">
    <location>
        <begin position="991"/>
        <end position="995"/>
    </location>
</feature>
<feature type="strand" evidence="7">
    <location>
        <begin position="1004"/>
        <end position="1010"/>
    </location>
</feature>
<feature type="helix" evidence="7">
    <location>
        <begin position="1013"/>
        <end position="1015"/>
    </location>
</feature>
<feature type="strand" evidence="7">
    <location>
        <begin position="1018"/>
        <end position="1026"/>
    </location>
</feature>
<feature type="strand" evidence="7">
    <location>
        <begin position="1028"/>
        <end position="1030"/>
    </location>
</feature>
<feature type="strand" evidence="7">
    <location>
        <begin position="1032"/>
        <end position="1034"/>
    </location>
</feature>
<feature type="turn" evidence="7">
    <location>
        <begin position="1038"/>
        <end position="1041"/>
    </location>
</feature>
<feature type="helix" evidence="7">
    <location>
        <begin position="1048"/>
        <end position="1051"/>
    </location>
</feature>
<feature type="helix" evidence="7">
    <location>
        <begin position="1056"/>
        <end position="1058"/>
    </location>
</feature>
<feature type="turn" evidence="7">
    <location>
        <begin position="1060"/>
        <end position="1063"/>
    </location>
</feature>
<feature type="strand" evidence="7">
    <location>
        <begin position="1069"/>
        <end position="1071"/>
    </location>
</feature>
<feature type="strand" evidence="7">
    <location>
        <begin position="1073"/>
        <end position="1075"/>
    </location>
</feature>
<feature type="strand" evidence="7">
    <location>
        <begin position="1079"/>
        <end position="1086"/>
    </location>
</feature>
<gene>
    <name type="primary">pulA</name>
</gene>
<proteinExistence type="evidence at protein level"/>
<accession>P07811</accession>
<protein>
    <recommendedName>
        <fullName>Pullulanase</fullName>
        <ecNumber>3.2.1.41</ecNumber>
    </recommendedName>
    <alternativeName>
        <fullName>Alpha-dextrin endo-1,6-alpha-glucosidase</fullName>
    </alternativeName>
    <alternativeName>
        <fullName>Pullulan 6-glucanohydrolase</fullName>
    </alternativeName>
</protein>
<comment type="catalytic activity">
    <reaction>
        <text>Hydrolysis of (1-&gt;6)-alpha-D-glucosidic linkages in pullulan, amylopectin and glycogen, and in the alpha- and beta-limit dextrins of amylopectin and glycogen.</text>
        <dbReference type="EC" id="3.2.1.41"/>
    </reaction>
</comment>
<comment type="subunit">
    <text evidence="3">Homotrimer.</text>
</comment>
<comment type="subcellular location">
    <subcellularLocation>
        <location evidence="4">Cell membrane</location>
        <topology evidence="4">Lipid-anchor</topology>
    </subcellularLocation>
</comment>
<comment type="similarity">
    <text evidence="4">Belongs to the glycosyl hydrolase 13 family.</text>
</comment>
<reference key="1">
    <citation type="journal article" date="1987" name="J. Bacteriol.">
        <title>Entire nucleotide sequence of the pullulanase gene of Klebsiella aerogenes W70.</title>
        <authorList>
            <person name="Katsuragi N."/>
            <person name="Takizawa N."/>
            <person name="Murooka Y."/>
        </authorList>
    </citation>
    <scope>NUCLEOTIDE SEQUENCE [GENOMIC DNA]</scope>
    <scope>DIACYLGLYCEROL AT CYS-20</scope>
    <scope>PALMITOYLATION AT CYS-20</scope>
    <source>
        <strain>W70</strain>
    </source>
</reference>
<reference key="2">
    <citation type="journal article" date="1988" name="EMBO J.">
        <title>Collagen-like sequences stabilize homotrimers of a bacterial hydrolase.</title>
        <authorList>
            <person name="Charalambous B.M."/>
            <person name="Keen J.N."/>
            <person name="McPherson M.J."/>
        </authorList>
    </citation>
    <scope>NUCLEOTIDE SEQUENCE [GENOMIC DNA] OF 1-74</scope>
    <scope>SUBUNIT</scope>
    <scope>DIACYLGLYCEROL AT CYS-20</scope>
    <scope>PALMITOYLATION AT CYS-20</scope>
    <source>
        <strain>FG9</strain>
    </source>
</reference>
<name>PULA_KLEAE</name>